<name>CRA_PLAFA</name>
<evidence type="ECO:0000256" key="1">
    <source>
        <dbReference type="SAM" id="MobiDB-lite"/>
    </source>
</evidence>
<evidence type="ECO:0000305" key="2"/>
<organism>
    <name type="scientific">Plasmodium falciparum</name>
    <dbReference type="NCBI Taxonomy" id="5833"/>
    <lineage>
        <taxon>Eukaryota</taxon>
        <taxon>Sar</taxon>
        <taxon>Alveolata</taxon>
        <taxon>Apicomplexa</taxon>
        <taxon>Aconoidasida</taxon>
        <taxon>Haemosporida</taxon>
        <taxon>Plasmodiidae</taxon>
        <taxon>Plasmodium</taxon>
        <taxon>Plasmodium (Laverania)</taxon>
    </lineage>
</organism>
<accession>P04923</accession>
<sequence length="162" mass="17350">MKILSVFFLALFFIIFNKESLAEKTNKGTGSGVSSKKKNKKGSGEPLIDVHDLISDMIKKEEELVEVNKRKSKYKLATSVLAGLLGVVSTVLLGGVGLVLYNTEKGRHPFKIGSSDPADNANPDADSESNGEPNADPQVTAQDVTPEQPQGDDNNLVSGPEH</sequence>
<keyword id="KW-0461">Malaria</keyword>
<keyword id="KW-0732">Signal</keyword>
<feature type="signal peptide" evidence="2">
    <location>
        <begin position="1"/>
        <end position="16"/>
    </location>
</feature>
<feature type="chain" id="PRO_0000024517" description="Circumsporozoite protein-related antigen">
    <location>
        <begin position="17"/>
        <end position="162"/>
    </location>
</feature>
<feature type="region of interest" description="Disordered" evidence="1">
    <location>
        <begin position="24"/>
        <end position="44"/>
    </location>
</feature>
<feature type="region of interest" description="Disordered" evidence="1">
    <location>
        <begin position="109"/>
        <end position="162"/>
    </location>
</feature>
<feature type="compositionally biased region" description="Low complexity" evidence="1">
    <location>
        <begin position="114"/>
        <end position="130"/>
    </location>
</feature>
<feature type="compositionally biased region" description="Polar residues" evidence="1">
    <location>
        <begin position="137"/>
        <end position="162"/>
    </location>
</feature>
<proteinExistence type="evidence at transcript level"/>
<protein>
    <recommendedName>
        <fullName>Circumsporozoite protein-related antigen</fullName>
        <shortName>CRA</shortName>
    </recommendedName>
</protein>
<comment type="miscellaneous">
    <text>Although there are no authentic repeats in this antigen, there are a number of internal homologies (N-A-N-P) and (N-A-D-P), the first of these tetramers is the dominant repeat found in the CSP of P.falciparum and reacts with antibodies against CRA. It is possible that immune responses to CRA may act against the CSP also. The CRA is found in many parasitic strains.</text>
</comment>
<reference key="1">
    <citation type="journal article" date="1985" name="Proc. Natl. Acad. Sci. U.S.A.">
        <title>A blood stage antigen of Plasmodium falciparum shares determinants with the sporozoite coat protein.</title>
        <authorList>
            <person name="Coppel R.L."/>
            <person name="Favaloro J.M."/>
            <person name="Crewther P.E."/>
            <person name="Burkot T.R."/>
            <person name="Bianco A.E."/>
            <person name="Stahl H.-D."/>
            <person name="Kemp D.J."/>
            <person name="Anders R.F."/>
            <person name="Brown G.V."/>
        </authorList>
    </citation>
    <scope>NUCLEOTIDE SEQUENCE [MRNA]</scope>
</reference>
<dbReference type="EMBL" id="M11145">
    <property type="protein sequence ID" value="AAA29523.1"/>
    <property type="molecule type" value="mRNA"/>
</dbReference>
<dbReference type="PIR" id="A25780">
    <property type="entry name" value="A25780"/>
</dbReference>
<dbReference type="VEuPathDB" id="PlasmoDB:PF3D7_1121600"/>
<dbReference type="VEuPathDB" id="PlasmoDB:Pf7G8-2_000344300"/>
<dbReference type="VEuPathDB" id="PlasmoDB:Pf7G8_110025200"/>
<dbReference type="VEuPathDB" id="PlasmoDB:PfCD01_110027000"/>
<dbReference type="VEuPathDB" id="PlasmoDB:PfDd2_110024600"/>
<dbReference type="VEuPathDB" id="PlasmoDB:PfGA01_110025800"/>
<dbReference type="VEuPathDB" id="PlasmoDB:PfGB4_110028100"/>
<dbReference type="VEuPathDB" id="PlasmoDB:PfGN01_110026100"/>
<dbReference type="VEuPathDB" id="PlasmoDB:PfHB3_110024800"/>
<dbReference type="VEuPathDB" id="PlasmoDB:PfIT_110025900"/>
<dbReference type="VEuPathDB" id="PlasmoDB:PfKE01_110026100"/>
<dbReference type="VEuPathDB" id="PlasmoDB:PfKH01_110025700"/>
<dbReference type="VEuPathDB" id="PlasmoDB:PfKH02_110026600"/>
<dbReference type="VEuPathDB" id="PlasmoDB:PfML01_110026400"/>
<dbReference type="VEuPathDB" id="PlasmoDB:PfNF135_110024700"/>
<dbReference type="VEuPathDB" id="PlasmoDB:PfNF166_110025000"/>
<dbReference type="VEuPathDB" id="PlasmoDB:PfNF54_110025900"/>
<dbReference type="VEuPathDB" id="PlasmoDB:PfSD01_110024200"/>
<dbReference type="VEuPathDB" id="PlasmoDB:PfSN01_110024700"/>
<dbReference type="VEuPathDB" id="PlasmoDB:PfTG01_110026000"/>
<dbReference type="Pfam" id="PF06589">
    <property type="entry name" value="CRA"/>
    <property type="match status" value="1"/>
</dbReference>